<name>YAB4_SCHPO</name>
<protein>
    <recommendedName>
        <fullName>Uncharacterized protein C2G11.04</fullName>
    </recommendedName>
</protein>
<evidence type="ECO:0000255" key="1">
    <source>
        <dbReference type="PROSITE-ProRule" id="PRU00092"/>
    </source>
</evidence>
<evidence type="ECO:0000256" key="2">
    <source>
        <dbReference type="SAM" id="MobiDB-lite"/>
    </source>
</evidence>
<dbReference type="EMBL" id="CU329670">
    <property type="protein sequence ID" value="CAA91169.1"/>
    <property type="molecule type" value="Genomic_DNA"/>
</dbReference>
<dbReference type="PIR" id="T38570">
    <property type="entry name" value="S62459"/>
</dbReference>
<dbReference type="SMR" id="Q09806"/>
<dbReference type="BioGRID" id="278433">
    <property type="interactions" value="7"/>
</dbReference>
<dbReference type="STRING" id="284812.Q09806"/>
<dbReference type="iPTMnet" id="Q09806"/>
<dbReference type="SwissPalm" id="Q09806"/>
<dbReference type="PaxDb" id="4896-SPAC2G11.04.1"/>
<dbReference type="EnsemblFungi" id="SPAC2G11.04.1">
    <property type="protein sequence ID" value="SPAC2G11.04.1:pep"/>
    <property type="gene ID" value="SPAC2G11.04"/>
</dbReference>
<dbReference type="KEGG" id="spo:2541946"/>
<dbReference type="PomBase" id="SPAC2G11.04"/>
<dbReference type="VEuPathDB" id="FungiDB:SPAC2G11.04"/>
<dbReference type="eggNOG" id="KOG0154">
    <property type="taxonomic scope" value="Eukaryota"/>
</dbReference>
<dbReference type="HOGENOM" id="CLU_977140_0_0_1"/>
<dbReference type="InParanoid" id="Q09806"/>
<dbReference type="OMA" id="WSELYNP"/>
<dbReference type="PRO" id="PR:Q09806"/>
<dbReference type="Proteomes" id="UP000002485">
    <property type="component" value="Chromosome I"/>
</dbReference>
<dbReference type="GO" id="GO:0005829">
    <property type="term" value="C:cytosol"/>
    <property type="evidence" value="ECO:0007005"/>
    <property type="project" value="PomBase"/>
</dbReference>
<dbReference type="GO" id="GO:0005634">
    <property type="term" value="C:nucleus"/>
    <property type="evidence" value="ECO:0007005"/>
    <property type="project" value="PomBase"/>
</dbReference>
<dbReference type="GO" id="GO:0003676">
    <property type="term" value="F:nucleic acid binding"/>
    <property type="evidence" value="ECO:0007669"/>
    <property type="project" value="InterPro"/>
</dbReference>
<dbReference type="GO" id="GO:0000380">
    <property type="term" value="P:alternative mRNA splicing, via spliceosome"/>
    <property type="evidence" value="ECO:0000266"/>
    <property type="project" value="PomBase"/>
</dbReference>
<dbReference type="GO" id="GO:0045292">
    <property type="term" value="P:mRNA cis splicing, via spliceosome"/>
    <property type="evidence" value="ECO:0000250"/>
    <property type="project" value="PomBase"/>
</dbReference>
<dbReference type="InterPro" id="IPR000467">
    <property type="entry name" value="G_patch_dom"/>
</dbReference>
<dbReference type="InterPro" id="IPR040052">
    <property type="entry name" value="RBM17"/>
</dbReference>
<dbReference type="PANTHER" id="PTHR13288:SF8">
    <property type="entry name" value="SPLICING FACTOR 45"/>
    <property type="match status" value="1"/>
</dbReference>
<dbReference type="PANTHER" id="PTHR13288">
    <property type="entry name" value="SPLICING FACTOR 45 SPF45"/>
    <property type="match status" value="1"/>
</dbReference>
<dbReference type="Pfam" id="PF01585">
    <property type="entry name" value="G-patch"/>
    <property type="match status" value="1"/>
</dbReference>
<dbReference type="SMART" id="SM00443">
    <property type="entry name" value="G_patch"/>
    <property type="match status" value="1"/>
</dbReference>
<dbReference type="PROSITE" id="PS50174">
    <property type="entry name" value="G_PATCH"/>
    <property type="match status" value="1"/>
</dbReference>
<feature type="chain" id="PRO_0000116410" description="Uncharacterized protein C2G11.04">
    <location>
        <begin position="1"/>
        <end position="301"/>
    </location>
</feature>
<feature type="domain" description="G-patch" evidence="1">
    <location>
        <begin position="252"/>
        <end position="301"/>
    </location>
</feature>
<feature type="region of interest" description="Disordered" evidence="2">
    <location>
        <begin position="16"/>
        <end position="38"/>
    </location>
</feature>
<feature type="compositionally biased region" description="Basic and acidic residues" evidence="2">
    <location>
        <begin position="16"/>
        <end position="28"/>
    </location>
</feature>
<feature type="compositionally biased region" description="Polar residues" evidence="2">
    <location>
        <begin position="29"/>
        <end position="38"/>
    </location>
</feature>
<keyword id="KW-1185">Reference proteome</keyword>
<accession>Q09806</accession>
<reference key="1">
    <citation type="journal article" date="2002" name="Nature">
        <title>The genome sequence of Schizosaccharomyces pombe.</title>
        <authorList>
            <person name="Wood V."/>
            <person name="Gwilliam R."/>
            <person name="Rajandream M.A."/>
            <person name="Lyne M.H."/>
            <person name="Lyne R."/>
            <person name="Stewart A."/>
            <person name="Sgouros J.G."/>
            <person name="Peat N."/>
            <person name="Hayles J."/>
            <person name="Baker S.G."/>
            <person name="Basham D."/>
            <person name="Bowman S."/>
            <person name="Brooks K."/>
            <person name="Brown D."/>
            <person name="Brown S."/>
            <person name="Chillingworth T."/>
            <person name="Churcher C.M."/>
            <person name="Collins M."/>
            <person name="Connor R."/>
            <person name="Cronin A."/>
            <person name="Davis P."/>
            <person name="Feltwell T."/>
            <person name="Fraser A."/>
            <person name="Gentles S."/>
            <person name="Goble A."/>
            <person name="Hamlin N."/>
            <person name="Harris D.E."/>
            <person name="Hidalgo J."/>
            <person name="Hodgson G."/>
            <person name="Holroyd S."/>
            <person name="Hornsby T."/>
            <person name="Howarth S."/>
            <person name="Huckle E.J."/>
            <person name="Hunt S."/>
            <person name="Jagels K."/>
            <person name="James K.D."/>
            <person name="Jones L."/>
            <person name="Jones M."/>
            <person name="Leather S."/>
            <person name="McDonald S."/>
            <person name="McLean J."/>
            <person name="Mooney P."/>
            <person name="Moule S."/>
            <person name="Mungall K.L."/>
            <person name="Murphy L.D."/>
            <person name="Niblett D."/>
            <person name="Odell C."/>
            <person name="Oliver K."/>
            <person name="O'Neil S."/>
            <person name="Pearson D."/>
            <person name="Quail M.A."/>
            <person name="Rabbinowitsch E."/>
            <person name="Rutherford K.M."/>
            <person name="Rutter S."/>
            <person name="Saunders D."/>
            <person name="Seeger K."/>
            <person name="Sharp S."/>
            <person name="Skelton J."/>
            <person name="Simmonds M.N."/>
            <person name="Squares R."/>
            <person name="Squares S."/>
            <person name="Stevens K."/>
            <person name="Taylor K."/>
            <person name="Taylor R.G."/>
            <person name="Tivey A."/>
            <person name="Walsh S.V."/>
            <person name="Warren T."/>
            <person name="Whitehead S."/>
            <person name="Woodward J.R."/>
            <person name="Volckaert G."/>
            <person name="Aert R."/>
            <person name="Robben J."/>
            <person name="Grymonprez B."/>
            <person name="Weltjens I."/>
            <person name="Vanstreels E."/>
            <person name="Rieger M."/>
            <person name="Schaefer M."/>
            <person name="Mueller-Auer S."/>
            <person name="Gabel C."/>
            <person name="Fuchs M."/>
            <person name="Duesterhoeft A."/>
            <person name="Fritzc C."/>
            <person name="Holzer E."/>
            <person name="Moestl D."/>
            <person name="Hilbert H."/>
            <person name="Borzym K."/>
            <person name="Langer I."/>
            <person name="Beck A."/>
            <person name="Lehrach H."/>
            <person name="Reinhardt R."/>
            <person name="Pohl T.M."/>
            <person name="Eger P."/>
            <person name="Zimmermann W."/>
            <person name="Wedler H."/>
            <person name="Wambutt R."/>
            <person name="Purnelle B."/>
            <person name="Goffeau A."/>
            <person name="Cadieu E."/>
            <person name="Dreano S."/>
            <person name="Gloux S."/>
            <person name="Lelaure V."/>
            <person name="Mottier S."/>
            <person name="Galibert F."/>
            <person name="Aves S.J."/>
            <person name="Xiang Z."/>
            <person name="Hunt C."/>
            <person name="Moore K."/>
            <person name="Hurst S.M."/>
            <person name="Lucas M."/>
            <person name="Rochet M."/>
            <person name="Gaillardin C."/>
            <person name="Tallada V.A."/>
            <person name="Garzon A."/>
            <person name="Thode G."/>
            <person name="Daga R.R."/>
            <person name="Cruzado L."/>
            <person name="Jimenez J."/>
            <person name="Sanchez M."/>
            <person name="del Rey F."/>
            <person name="Benito J."/>
            <person name="Dominguez A."/>
            <person name="Revuelta J.L."/>
            <person name="Moreno S."/>
            <person name="Armstrong J."/>
            <person name="Forsburg S.L."/>
            <person name="Cerutti L."/>
            <person name="Lowe T."/>
            <person name="McCombie W.R."/>
            <person name="Paulsen I."/>
            <person name="Potashkin J."/>
            <person name="Shpakovski G.V."/>
            <person name="Ussery D."/>
            <person name="Barrell B.G."/>
            <person name="Nurse P."/>
        </authorList>
    </citation>
    <scope>NUCLEOTIDE SEQUENCE [LARGE SCALE GENOMIC DNA]</scope>
    <source>
        <strain>972 / ATCC 24843</strain>
    </source>
</reference>
<sequence length="301" mass="33413">MGFMLYEGIDSKSIEEITEESEKTKTDLQKANTPNKTEAVHSLNNTCSEQNSGTKDYLNSLQFLPSNFRPKTHKKKKSVSSYLSSTIQKNANENIPHVQCRNDSQSTVTTRNPTPFKIEVGIYPSKPNNLNKEPPASTVHSDNLGDAVEHEWVELYDPLFPTSYSVFKESDYANLCETNWSHYVNQVPSLSIEAKLSNIVNASKSGIGPPPSLLSHATLARPSESMVLSNNIAAEDLDFFKKSPPVPAISKKENVALKMLQRCGWKEGQGLGQHNQGIINPLHVEISGFVTETKHSKINDK</sequence>
<proteinExistence type="predicted"/>
<organism>
    <name type="scientific">Schizosaccharomyces pombe (strain 972 / ATCC 24843)</name>
    <name type="common">Fission yeast</name>
    <dbReference type="NCBI Taxonomy" id="284812"/>
    <lineage>
        <taxon>Eukaryota</taxon>
        <taxon>Fungi</taxon>
        <taxon>Dikarya</taxon>
        <taxon>Ascomycota</taxon>
        <taxon>Taphrinomycotina</taxon>
        <taxon>Schizosaccharomycetes</taxon>
        <taxon>Schizosaccharomycetales</taxon>
        <taxon>Schizosaccharomycetaceae</taxon>
        <taxon>Schizosaccharomyces</taxon>
    </lineage>
</organism>
<gene>
    <name type="ORF">SPAC2G11.04</name>
</gene>